<accession>Q0E2L3</accession>
<accession>A0A0P0VGZ2</accession>
<accession>B9F4E7</accession>
<accession>Q0E2L4</accession>
<accession>Q6H535</accession>
<proteinExistence type="inferred from homology"/>
<protein>
    <recommendedName>
        <fullName evidence="6">Kinesin-like protein KIN-14D</fullName>
    </recommendedName>
</protein>
<organism>
    <name type="scientific">Oryza sativa subsp. japonica</name>
    <name type="common">Rice</name>
    <dbReference type="NCBI Taxonomy" id="39947"/>
    <lineage>
        <taxon>Eukaryota</taxon>
        <taxon>Viridiplantae</taxon>
        <taxon>Streptophyta</taxon>
        <taxon>Embryophyta</taxon>
        <taxon>Tracheophyta</taxon>
        <taxon>Spermatophyta</taxon>
        <taxon>Magnoliopsida</taxon>
        <taxon>Liliopsida</taxon>
        <taxon>Poales</taxon>
        <taxon>Poaceae</taxon>
        <taxon>BOP clade</taxon>
        <taxon>Oryzoideae</taxon>
        <taxon>Oryzeae</taxon>
        <taxon>Oryzinae</taxon>
        <taxon>Oryza</taxon>
        <taxon>Oryza sativa</taxon>
    </lineage>
</organism>
<reference key="1">
    <citation type="journal article" date="2005" name="Nature">
        <title>The map-based sequence of the rice genome.</title>
        <authorList>
            <consortium name="International rice genome sequencing project (IRGSP)"/>
        </authorList>
    </citation>
    <scope>NUCLEOTIDE SEQUENCE [LARGE SCALE GENOMIC DNA]</scope>
    <source>
        <strain>cv. Nipponbare</strain>
    </source>
</reference>
<reference key="2">
    <citation type="journal article" date="2008" name="Nucleic Acids Res.">
        <title>The rice annotation project database (RAP-DB): 2008 update.</title>
        <authorList>
            <consortium name="The rice annotation project (RAP)"/>
        </authorList>
    </citation>
    <scope>GENOME REANNOTATION</scope>
    <source>
        <strain>cv. Nipponbare</strain>
    </source>
</reference>
<reference key="3">
    <citation type="journal article" date="2013" name="Rice">
        <title>Improvement of the Oryza sativa Nipponbare reference genome using next generation sequence and optical map data.</title>
        <authorList>
            <person name="Kawahara Y."/>
            <person name="de la Bastide M."/>
            <person name="Hamilton J.P."/>
            <person name="Kanamori H."/>
            <person name="McCombie W.R."/>
            <person name="Ouyang S."/>
            <person name="Schwartz D.C."/>
            <person name="Tanaka T."/>
            <person name="Wu J."/>
            <person name="Zhou S."/>
            <person name="Childs K.L."/>
            <person name="Davidson R.M."/>
            <person name="Lin H."/>
            <person name="Quesada-Ocampo L."/>
            <person name="Vaillancourt B."/>
            <person name="Sakai H."/>
            <person name="Lee S.S."/>
            <person name="Kim J."/>
            <person name="Numa H."/>
            <person name="Itoh T."/>
            <person name="Buell C.R."/>
            <person name="Matsumoto T."/>
        </authorList>
    </citation>
    <scope>GENOME REANNOTATION</scope>
    <source>
        <strain>cv. Nipponbare</strain>
    </source>
</reference>
<reference key="4">
    <citation type="journal article" date="2005" name="PLoS Biol.">
        <title>The genomes of Oryza sativa: a history of duplications.</title>
        <authorList>
            <person name="Yu J."/>
            <person name="Wang J."/>
            <person name="Lin W."/>
            <person name="Li S."/>
            <person name="Li H."/>
            <person name="Zhou J."/>
            <person name="Ni P."/>
            <person name="Dong W."/>
            <person name="Hu S."/>
            <person name="Zeng C."/>
            <person name="Zhang J."/>
            <person name="Zhang Y."/>
            <person name="Li R."/>
            <person name="Xu Z."/>
            <person name="Li S."/>
            <person name="Li X."/>
            <person name="Zheng H."/>
            <person name="Cong L."/>
            <person name="Lin L."/>
            <person name="Yin J."/>
            <person name="Geng J."/>
            <person name="Li G."/>
            <person name="Shi J."/>
            <person name="Liu J."/>
            <person name="Lv H."/>
            <person name="Li J."/>
            <person name="Wang J."/>
            <person name="Deng Y."/>
            <person name="Ran L."/>
            <person name="Shi X."/>
            <person name="Wang X."/>
            <person name="Wu Q."/>
            <person name="Li C."/>
            <person name="Ren X."/>
            <person name="Wang J."/>
            <person name="Wang X."/>
            <person name="Li D."/>
            <person name="Liu D."/>
            <person name="Zhang X."/>
            <person name="Ji Z."/>
            <person name="Zhao W."/>
            <person name="Sun Y."/>
            <person name="Zhang Z."/>
            <person name="Bao J."/>
            <person name="Han Y."/>
            <person name="Dong L."/>
            <person name="Ji J."/>
            <person name="Chen P."/>
            <person name="Wu S."/>
            <person name="Liu J."/>
            <person name="Xiao Y."/>
            <person name="Bu D."/>
            <person name="Tan J."/>
            <person name="Yang L."/>
            <person name="Ye C."/>
            <person name="Zhang J."/>
            <person name="Xu J."/>
            <person name="Zhou Y."/>
            <person name="Yu Y."/>
            <person name="Zhang B."/>
            <person name="Zhuang S."/>
            <person name="Wei H."/>
            <person name="Liu B."/>
            <person name="Lei M."/>
            <person name="Yu H."/>
            <person name="Li Y."/>
            <person name="Xu H."/>
            <person name="Wei S."/>
            <person name="He X."/>
            <person name="Fang L."/>
            <person name="Zhang Z."/>
            <person name="Zhang Y."/>
            <person name="Huang X."/>
            <person name="Su Z."/>
            <person name="Tong W."/>
            <person name="Li J."/>
            <person name="Tong Z."/>
            <person name="Li S."/>
            <person name="Ye J."/>
            <person name="Wang L."/>
            <person name="Fang L."/>
            <person name="Lei T."/>
            <person name="Chen C.-S."/>
            <person name="Chen H.-C."/>
            <person name="Xu Z."/>
            <person name="Li H."/>
            <person name="Huang H."/>
            <person name="Zhang F."/>
            <person name="Xu H."/>
            <person name="Li N."/>
            <person name="Zhao C."/>
            <person name="Li S."/>
            <person name="Dong L."/>
            <person name="Huang Y."/>
            <person name="Li L."/>
            <person name="Xi Y."/>
            <person name="Qi Q."/>
            <person name="Li W."/>
            <person name="Zhang B."/>
            <person name="Hu W."/>
            <person name="Zhang Y."/>
            <person name="Tian X."/>
            <person name="Jiao Y."/>
            <person name="Liang X."/>
            <person name="Jin J."/>
            <person name="Gao L."/>
            <person name="Zheng W."/>
            <person name="Hao B."/>
            <person name="Liu S.-M."/>
            <person name="Wang W."/>
            <person name="Yuan L."/>
            <person name="Cao M."/>
            <person name="McDermott J."/>
            <person name="Samudrala R."/>
            <person name="Wang J."/>
            <person name="Wong G.K.-S."/>
            <person name="Yang H."/>
        </authorList>
    </citation>
    <scope>NUCLEOTIDE SEQUENCE [LARGE SCALE GENOMIC DNA]</scope>
    <source>
        <strain>cv. Nipponbare</strain>
    </source>
</reference>
<reference key="5">
    <citation type="journal article" date="2009" name="Ann. Bot.">
        <title>Evaluating the microtubule cytoskeleton and its interacting proteins in monocots by mining the rice genome.</title>
        <authorList>
            <person name="Guo L."/>
            <person name="Ho C.M."/>
            <person name="Kong Z."/>
            <person name="Lee Y.R."/>
            <person name="Qian Q."/>
            <person name="Liu B."/>
        </authorList>
    </citation>
    <scope>GENE FAMILY</scope>
    <scope>NOMENCLATURE</scope>
</reference>
<sequence>MSSSNNAAAAAASPDPSRRREDVVGWLLALFPDLPLPPPPEATDEDLRAALATGRLLCALLRRLCPGALLDDASTDNVGRFRAAVERMGVAKFSASDLERGQMTAVVNCILALKDRFGSRGGDDHRNPGFLTRCDSEGGRKRVESKLQRMLTSPIMSGIPGVDKLTIATDFVMVFQLKQGGYADQLGGKYSDLLKSTSLDNAPTQSLLGVFNSILDESIERKNGQIPYRIACLLRKVILEIERRISTQAGHIRNQNNLIKAREEKYQSRIRVLEVLAGGVSGQTHEKEGMINLKTVKAEETQRIEDEESKKEDVARLLTDKENNDSIISELKKELEETKRLHEAHSQQLETKAAQVSKELEQRIEEVKLMLDDSTKRRIELEELSETRIQFWKKKEVVIDQFVSLQVQNVQDLKLSSVSVRHEILNCQNKWSEELAGLGKSLKVVTNTAEKYHGALAENRKLFNEIQELKGNIRVYCRIRPFRPGEDDKSSSVEYIGDNGELVLSNPTKQGKEGGKNFTFNKVFGPITTQDAVFKDIQPLIRSVLDGYNVCIFAYGQTGSGKTYTMMGPEKATEKEWGVNYRALNDLFNISHDRRDTITYELGVQMIEIYNEQIRDLLGSGGVQKKLGIQNTIQPNGLAVPDATMCPVTSTSHVIELMQTGHDNRAMSATALNERSSRSHSVVTIHVRGQDLKTGNTLRGALHLVDLAGSERVDRSAVTGDRLKEAQHINKSLAALGDVIFSLSQKNAHVPYRNSKLTQVLQTSLGGHAKTLMFVQVNPDVSSYTETLSTLKFAERVSGVELGVARSNKEGKEGKDVKELMDQLSLLKDTISKKDEEIDRLQLLNSSTRLKPTRQADSVLKHSSSSPGITSLGKGTSVGSGAASDLDNFSDTSDRQSEAGSMLSVDPEISGLADVDSDGRTRAVNRVQKLTLPKAGQSSSLRPKPRDPAPAATGVRKSSTSQATPLARNNSTLKRGP</sequence>
<feature type="chain" id="PRO_0000438630" description="Kinesin-like protein KIN-14D">
    <location>
        <begin position="1"/>
        <end position="977"/>
    </location>
</feature>
<feature type="domain" description="Calponin-homology (CH)" evidence="2">
    <location>
        <begin position="17"/>
        <end position="118"/>
    </location>
</feature>
<feature type="domain" description="Kinesin motor" evidence="3">
    <location>
        <begin position="472"/>
        <end position="800"/>
    </location>
</feature>
<feature type="region of interest" description="Disordered" evidence="4">
    <location>
        <begin position="1"/>
        <end position="20"/>
    </location>
</feature>
<feature type="region of interest" description="Disordered" evidence="4">
    <location>
        <begin position="852"/>
        <end position="977"/>
    </location>
</feature>
<feature type="coiled-coil region" evidence="1">
    <location>
        <begin position="297"/>
        <end position="384"/>
    </location>
</feature>
<feature type="coiled-coil region" evidence="1">
    <location>
        <begin position="812"/>
        <end position="847"/>
    </location>
</feature>
<feature type="compositionally biased region" description="Low complexity" evidence="4">
    <location>
        <begin position="1"/>
        <end position="13"/>
    </location>
</feature>
<feature type="compositionally biased region" description="Polar residues" evidence="4">
    <location>
        <begin position="861"/>
        <end position="879"/>
    </location>
</feature>
<feature type="compositionally biased region" description="Polar residues" evidence="4">
    <location>
        <begin position="956"/>
        <end position="977"/>
    </location>
</feature>
<feature type="binding site" evidence="3">
    <location>
        <begin position="556"/>
        <end position="563"/>
    </location>
    <ligand>
        <name>ATP</name>
        <dbReference type="ChEBI" id="CHEBI:30616"/>
    </ligand>
</feature>
<comment type="similarity">
    <text evidence="5">Belongs to the TRAFAC class myosin-kinesin ATPase superfamily. Kinesin family. KIN-14 subfamily.</text>
</comment>
<comment type="sequence caution" evidence="6">
    <conflict type="erroneous gene model prediction">
        <sequence resource="EMBL-CDS" id="BAD26164"/>
    </conflict>
</comment>
<comment type="sequence caution" evidence="6">
    <conflict type="erroneous gene model prediction">
        <sequence resource="EMBL-CDS" id="BAF08274"/>
    </conflict>
    <text>Was originally thought to correspond to two different genes Os02g0229500 and Os02g0229600.</text>
</comment>
<comment type="sequence caution" evidence="6">
    <conflict type="erroneous gene model prediction">
        <sequence resource="EMBL-CDS" id="BAF08275"/>
    </conflict>
    <text>Was originally thought to correspond to two different genes Os02g0229500 and Os02g0229600.</text>
</comment>
<comment type="sequence caution" evidence="6">
    <conflict type="erroneous gene model prediction">
        <sequence resource="EMBL-CDS" id="BAS77765"/>
    </conflict>
</comment>
<comment type="sequence caution" evidence="6">
    <conflict type="erroneous gene model prediction">
        <sequence resource="EMBL-CDS" id="EEE56604"/>
    </conflict>
</comment>
<name>KN14D_ORYSJ</name>
<gene>
    <name evidence="6" type="primary">KIN14D</name>
    <name evidence="8 9" type="ordered locus">Os02g0229500/Os02g0229600</name>
    <name evidence="6" type="ordered locus">LOC_Os02g13570/LOC_Os02g13580</name>
    <name evidence="10" type="ORF">OsJ_05972</name>
    <name evidence="7" type="ORF">OSJNBb0035N08.18</name>
</gene>
<evidence type="ECO:0000255" key="1"/>
<evidence type="ECO:0000255" key="2">
    <source>
        <dbReference type="PROSITE-ProRule" id="PRU00044"/>
    </source>
</evidence>
<evidence type="ECO:0000255" key="3">
    <source>
        <dbReference type="PROSITE-ProRule" id="PRU00283"/>
    </source>
</evidence>
<evidence type="ECO:0000256" key="4">
    <source>
        <dbReference type="SAM" id="MobiDB-lite"/>
    </source>
</evidence>
<evidence type="ECO:0000303" key="5">
    <source>
    </source>
</evidence>
<evidence type="ECO:0000305" key="6"/>
<evidence type="ECO:0000312" key="7">
    <source>
        <dbReference type="EMBL" id="BAD26164.1"/>
    </source>
</evidence>
<evidence type="ECO:0000312" key="8">
    <source>
        <dbReference type="EMBL" id="BAF08274.1"/>
    </source>
</evidence>
<evidence type="ECO:0000312" key="9">
    <source>
        <dbReference type="EMBL" id="BAF08275.1"/>
    </source>
</evidence>
<evidence type="ECO:0000312" key="10">
    <source>
        <dbReference type="EMBL" id="EEE56604.1"/>
    </source>
</evidence>
<dbReference type="EMBL" id="AP005756">
    <property type="protein sequence ID" value="BAD26164.1"/>
    <property type="status" value="ALT_SEQ"/>
    <property type="molecule type" value="Genomic_DNA"/>
</dbReference>
<dbReference type="EMBL" id="AP008208">
    <property type="protein sequence ID" value="BAF08274.1"/>
    <property type="status" value="ALT_SEQ"/>
    <property type="molecule type" value="Genomic_DNA"/>
</dbReference>
<dbReference type="EMBL" id="AP008208">
    <property type="protein sequence ID" value="BAF08275.1"/>
    <property type="status" value="ALT_SEQ"/>
    <property type="molecule type" value="Genomic_DNA"/>
</dbReference>
<dbReference type="EMBL" id="AP014958">
    <property type="protein sequence ID" value="BAS77765.1"/>
    <property type="status" value="ALT_SEQ"/>
    <property type="molecule type" value="Genomic_DNA"/>
</dbReference>
<dbReference type="EMBL" id="CM000139">
    <property type="protein sequence ID" value="EEE56604.1"/>
    <property type="status" value="ALT_SEQ"/>
    <property type="molecule type" value="Genomic_DNA"/>
</dbReference>
<dbReference type="SMR" id="Q0E2L3"/>
<dbReference type="FunCoup" id="Q0E2L3">
    <property type="interactions" value="4"/>
</dbReference>
<dbReference type="STRING" id="39947.Q0E2L3"/>
<dbReference type="PaxDb" id="39947-Q0E2L3"/>
<dbReference type="KEGG" id="dosa:Os02g0229500"/>
<dbReference type="KEGG" id="dosa:Os02g0229600"/>
<dbReference type="eggNOG" id="KOG0239">
    <property type="taxonomic scope" value="Eukaryota"/>
</dbReference>
<dbReference type="InParanoid" id="Q0E2L3"/>
<dbReference type="Proteomes" id="UP000000763">
    <property type="component" value="Chromosome 2"/>
</dbReference>
<dbReference type="Proteomes" id="UP000007752">
    <property type="component" value="Chromosome 2"/>
</dbReference>
<dbReference type="Proteomes" id="UP000059680">
    <property type="component" value="Chromosome 2"/>
</dbReference>
<dbReference type="GO" id="GO:0005874">
    <property type="term" value="C:microtubule"/>
    <property type="evidence" value="ECO:0007669"/>
    <property type="project" value="UniProtKB-KW"/>
</dbReference>
<dbReference type="GO" id="GO:0015630">
    <property type="term" value="C:microtubule cytoskeleton"/>
    <property type="evidence" value="ECO:0000318"/>
    <property type="project" value="GO_Central"/>
</dbReference>
<dbReference type="GO" id="GO:0005524">
    <property type="term" value="F:ATP binding"/>
    <property type="evidence" value="ECO:0007669"/>
    <property type="project" value="UniProtKB-KW"/>
</dbReference>
<dbReference type="GO" id="GO:0008017">
    <property type="term" value="F:microtubule binding"/>
    <property type="evidence" value="ECO:0000318"/>
    <property type="project" value="GO_Central"/>
</dbReference>
<dbReference type="GO" id="GO:0003777">
    <property type="term" value="F:microtubule motor activity"/>
    <property type="evidence" value="ECO:0007669"/>
    <property type="project" value="InterPro"/>
</dbReference>
<dbReference type="GO" id="GO:0007018">
    <property type="term" value="P:microtubule-based movement"/>
    <property type="evidence" value="ECO:0007669"/>
    <property type="project" value="InterPro"/>
</dbReference>
<dbReference type="GO" id="GO:0007017">
    <property type="term" value="P:microtubule-based process"/>
    <property type="evidence" value="ECO:0000318"/>
    <property type="project" value="GO_Central"/>
</dbReference>
<dbReference type="FunFam" id="1.10.418.10:FF:000090">
    <property type="entry name" value="Kinesin-like protein KIN-14D"/>
    <property type="match status" value="1"/>
</dbReference>
<dbReference type="FunFam" id="3.40.850.10:FF:000044">
    <property type="entry name" value="p-loop containing nucleoside triphosphate hydrolases superfamily protein"/>
    <property type="match status" value="1"/>
</dbReference>
<dbReference type="Gene3D" id="1.10.418.10">
    <property type="entry name" value="Calponin-like domain"/>
    <property type="match status" value="1"/>
</dbReference>
<dbReference type="Gene3D" id="3.40.850.10">
    <property type="entry name" value="Kinesin motor domain"/>
    <property type="match status" value="1"/>
</dbReference>
<dbReference type="InterPro" id="IPR001715">
    <property type="entry name" value="CH_dom"/>
</dbReference>
<dbReference type="InterPro" id="IPR036872">
    <property type="entry name" value="CH_dom_sf"/>
</dbReference>
<dbReference type="InterPro" id="IPR027640">
    <property type="entry name" value="Kinesin-like_fam"/>
</dbReference>
<dbReference type="InterPro" id="IPR001752">
    <property type="entry name" value="Kinesin_motor_dom"/>
</dbReference>
<dbReference type="InterPro" id="IPR036961">
    <property type="entry name" value="Kinesin_motor_dom_sf"/>
</dbReference>
<dbReference type="InterPro" id="IPR027417">
    <property type="entry name" value="P-loop_NTPase"/>
</dbReference>
<dbReference type="PANTHER" id="PTHR47972:SF15">
    <property type="entry name" value="KINESIN-LIKE PROTEIN KIN-14D"/>
    <property type="match status" value="1"/>
</dbReference>
<dbReference type="PANTHER" id="PTHR47972">
    <property type="entry name" value="KINESIN-LIKE PROTEIN KLP-3"/>
    <property type="match status" value="1"/>
</dbReference>
<dbReference type="Pfam" id="PF00225">
    <property type="entry name" value="Kinesin"/>
    <property type="match status" value="1"/>
</dbReference>
<dbReference type="PRINTS" id="PR00380">
    <property type="entry name" value="KINESINHEAVY"/>
</dbReference>
<dbReference type="SMART" id="SM00129">
    <property type="entry name" value="KISc"/>
    <property type="match status" value="1"/>
</dbReference>
<dbReference type="SUPFAM" id="SSF47576">
    <property type="entry name" value="Calponin-homology domain, CH-domain"/>
    <property type="match status" value="1"/>
</dbReference>
<dbReference type="SUPFAM" id="SSF52540">
    <property type="entry name" value="P-loop containing nucleoside triphosphate hydrolases"/>
    <property type="match status" value="1"/>
</dbReference>
<dbReference type="PROSITE" id="PS50021">
    <property type="entry name" value="CH"/>
    <property type="match status" value="1"/>
</dbReference>
<dbReference type="PROSITE" id="PS50067">
    <property type="entry name" value="KINESIN_MOTOR_2"/>
    <property type="match status" value="1"/>
</dbReference>
<keyword id="KW-0067">ATP-binding</keyword>
<keyword id="KW-0175">Coiled coil</keyword>
<keyword id="KW-0493">Microtubule</keyword>
<keyword id="KW-0505">Motor protein</keyword>
<keyword id="KW-0547">Nucleotide-binding</keyword>
<keyword id="KW-1185">Reference proteome</keyword>